<reference key="1">
    <citation type="submission" date="2006-08" db="EMBL/GenBank/DDBJ databases">
        <authorList>
            <consortium name="NIH - Xenopus Gene Collection (XGC) project"/>
        </authorList>
    </citation>
    <scope>NUCLEOTIDE SEQUENCE [LARGE SCALE MRNA]</scope>
    <source>
        <tissue>Testis</tissue>
    </source>
</reference>
<proteinExistence type="evidence at transcript level"/>
<gene>
    <name type="primary">osbpl9</name>
</gene>
<accession>Q0IJ05</accession>
<organism>
    <name type="scientific">Xenopus tropicalis</name>
    <name type="common">Western clawed frog</name>
    <name type="synonym">Silurana tropicalis</name>
    <dbReference type="NCBI Taxonomy" id="8364"/>
    <lineage>
        <taxon>Eukaryota</taxon>
        <taxon>Metazoa</taxon>
        <taxon>Chordata</taxon>
        <taxon>Craniata</taxon>
        <taxon>Vertebrata</taxon>
        <taxon>Euteleostomi</taxon>
        <taxon>Amphibia</taxon>
        <taxon>Batrachia</taxon>
        <taxon>Anura</taxon>
        <taxon>Pipoidea</taxon>
        <taxon>Pipidae</taxon>
        <taxon>Xenopodinae</taxon>
        <taxon>Xenopus</taxon>
        <taxon>Silurana</taxon>
    </lineage>
</organism>
<sequence>MASIMEGPLSKWTNVMKGWQYRWFVLDYNAGLLSYYTSKDKMMRGSRRGCVRLRGAVIGIDDEDDSTFTITVDQKTFHFQARDADEREKWIHALEETILRHTLQIQQGLDSGFVPSVQDFDKKLAESDAYLQILIDQIKLFDDKIQSCKDDEQRKKIEDLKDTTCSMVESIKHCIVLLQIAKDQTNEEKHADGFISTINPVDSIYQPSALESVVIPTMPTQASPVPESVQVCKGEPRPSSLAVGPVVSNLGSRQSPTPISTGSGQSAPSSSLTSPSHVNLSPNTVPDFSYSSSEDEFYDADEFYQSSTSPKRCMDSSESATALTHSSTGASLKRPDTTESLNSSMSNGTNEAEQFDTHDDRDDDGEGESVEEHKSVIMHLLSQVRLGMDLTKVVLPTFILERRSLLEMYADFFAHPDLFVSIGEHKDPKDRMAQVVKWYLSAFHAGRKGSVAKKPYNPILGEVFQCHWALPGLENDENPEAVSEGPIPWASKNNVTFVAEQVSHHPPISAFYAECYNKRIQFNAHIWTKSKFLGMSIGVHNIGQGCVSCLDYDEHYILTFPNGYGRSILTVPWVELGGECTINCSKTGYNATITFHTKPFYGGKKHRVTAEIYSPNDKKPFCSIEGEWNGIMYAKNANGENTVFIDTKKMPTVKKKVRKLEDQEEYESRRMWKDVTFNLKIKDIDAATEAKHRLEEKQRAEARERKEKEKQWETRLFHEDGECWVYDEPLLKREPSLRY</sequence>
<evidence type="ECO:0000250" key="1">
    <source>
        <dbReference type="UniProtKB" id="Q96SU4"/>
    </source>
</evidence>
<evidence type="ECO:0000255" key="2">
    <source>
        <dbReference type="PROSITE-ProRule" id="PRU00145"/>
    </source>
</evidence>
<evidence type="ECO:0000256" key="3">
    <source>
        <dbReference type="SAM" id="MobiDB-lite"/>
    </source>
</evidence>
<evidence type="ECO:0000305" key="4"/>
<protein>
    <recommendedName>
        <fullName>Oxysterol-binding protein-related protein 9</fullName>
    </recommendedName>
</protein>
<dbReference type="EMBL" id="BC121304">
    <property type="protein sequence ID" value="AAI21305.1"/>
    <property type="molecule type" value="mRNA"/>
</dbReference>
<dbReference type="RefSeq" id="NP_001072284.1">
    <property type="nucleotide sequence ID" value="NM_001078816.1"/>
</dbReference>
<dbReference type="SMR" id="Q0IJ05"/>
<dbReference type="FunCoup" id="Q0IJ05">
    <property type="interactions" value="3648"/>
</dbReference>
<dbReference type="STRING" id="8364.ENSXETP00000023941"/>
<dbReference type="PaxDb" id="8364-ENSXETP00000006166"/>
<dbReference type="DNASU" id="779737"/>
<dbReference type="GeneID" id="779737"/>
<dbReference type="KEGG" id="xtr:779737"/>
<dbReference type="AGR" id="Xenbase:XB-GENE-948223"/>
<dbReference type="CTD" id="114883"/>
<dbReference type="Xenbase" id="XB-GENE-948223">
    <property type="gene designation" value="osbpl9"/>
</dbReference>
<dbReference type="eggNOG" id="KOG2210">
    <property type="taxonomic scope" value="Eukaryota"/>
</dbReference>
<dbReference type="HOGENOM" id="CLU_012334_3_0_1"/>
<dbReference type="InParanoid" id="Q0IJ05"/>
<dbReference type="OrthoDB" id="48057at2759"/>
<dbReference type="Reactome" id="R-XTR-192105">
    <property type="pathway name" value="Synthesis of bile acids and bile salts"/>
</dbReference>
<dbReference type="Proteomes" id="UP000008143">
    <property type="component" value="Chromosome 4"/>
</dbReference>
<dbReference type="GO" id="GO:0008289">
    <property type="term" value="F:lipid binding"/>
    <property type="evidence" value="ECO:0007669"/>
    <property type="project" value="UniProtKB-KW"/>
</dbReference>
<dbReference type="GO" id="GO:0006869">
    <property type="term" value="P:lipid transport"/>
    <property type="evidence" value="ECO:0007669"/>
    <property type="project" value="UniProtKB-KW"/>
</dbReference>
<dbReference type="CDD" id="cd13290">
    <property type="entry name" value="PH_ORP9"/>
    <property type="match status" value="1"/>
</dbReference>
<dbReference type="FunFam" id="1.10.287.2720:FF:000001">
    <property type="entry name" value="Oxysterol-binding OBPalpha"/>
    <property type="match status" value="1"/>
</dbReference>
<dbReference type="FunFam" id="2.30.29.30:FF:000089">
    <property type="entry name" value="Oxysterol-binding protein"/>
    <property type="match status" value="1"/>
</dbReference>
<dbReference type="FunFam" id="2.40.160.120:FF:000002">
    <property type="entry name" value="Oxysterol-binding protein"/>
    <property type="match status" value="1"/>
</dbReference>
<dbReference type="FunFam" id="3.30.70.3490:FF:000001">
    <property type="entry name" value="Oxysterol-binding protein"/>
    <property type="match status" value="1"/>
</dbReference>
<dbReference type="Gene3D" id="1.10.287.2720">
    <property type="match status" value="1"/>
</dbReference>
<dbReference type="Gene3D" id="2.40.160.120">
    <property type="match status" value="1"/>
</dbReference>
<dbReference type="Gene3D" id="3.30.70.3490">
    <property type="match status" value="1"/>
</dbReference>
<dbReference type="Gene3D" id="2.30.29.30">
    <property type="entry name" value="Pleckstrin-homology domain (PH domain)/Phosphotyrosine-binding domain (PTB)"/>
    <property type="match status" value="1"/>
</dbReference>
<dbReference type="InterPro" id="IPR037239">
    <property type="entry name" value="OSBP_sf"/>
</dbReference>
<dbReference type="InterPro" id="IPR000648">
    <property type="entry name" value="Oxysterol-bd"/>
</dbReference>
<dbReference type="InterPro" id="IPR018494">
    <property type="entry name" value="Oxysterol-bd_CS"/>
</dbReference>
<dbReference type="InterPro" id="IPR011993">
    <property type="entry name" value="PH-like_dom_sf"/>
</dbReference>
<dbReference type="InterPro" id="IPR001849">
    <property type="entry name" value="PH_domain"/>
</dbReference>
<dbReference type="PANTHER" id="PTHR10972">
    <property type="entry name" value="OXYSTEROL-BINDING PROTEIN-RELATED"/>
    <property type="match status" value="1"/>
</dbReference>
<dbReference type="PANTHER" id="PTHR10972:SF200">
    <property type="entry name" value="OXYSTEROL-BINDING PROTEIN-RELATED PROTEIN 9"/>
    <property type="match status" value="1"/>
</dbReference>
<dbReference type="Pfam" id="PF01237">
    <property type="entry name" value="Oxysterol_BP"/>
    <property type="match status" value="2"/>
</dbReference>
<dbReference type="Pfam" id="PF00169">
    <property type="entry name" value="PH"/>
    <property type="match status" value="1"/>
</dbReference>
<dbReference type="SMART" id="SM00233">
    <property type="entry name" value="PH"/>
    <property type="match status" value="1"/>
</dbReference>
<dbReference type="SUPFAM" id="SSF144000">
    <property type="entry name" value="Oxysterol-binding protein-like"/>
    <property type="match status" value="1"/>
</dbReference>
<dbReference type="SUPFAM" id="SSF50729">
    <property type="entry name" value="PH domain-like"/>
    <property type="match status" value="1"/>
</dbReference>
<dbReference type="PROSITE" id="PS01013">
    <property type="entry name" value="OSBP"/>
    <property type="match status" value="1"/>
</dbReference>
<dbReference type="PROSITE" id="PS50003">
    <property type="entry name" value="PH_DOMAIN"/>
    <property type="match status" value="1"/>
</dbReference>
<feature type="chain" id="PRO_0000366291" description="Oxysterol-binding protein-related protein 9">
    <location>
        <begin position="1"/>
        <end position="739"/>
    </location>
</feature>
<feature type="domain" description="PH" evidence="2">
    <location>
        <begin position="2"/>
        <end position="99"/>
    </location>
</feature>
<feature type="region of interest" description="Disordered" evidence="3">
    <location>
        <begin position="220"/>
        <end position="292"/>
    </location>
</feature>
<feature type="region of interest" description="Disordered" evidence="3">
    <location>
        <begin position="306"/>
        <end position="371"/>
    </location>
</feature>
<feature type="compositionally biased region" description="Polar residues" evidence="3">
    <location>
        <begin position="249"/>
        <end position="259"/>
    </location>
</feature>
<feature type="compositionally biased region" description="Low complexity" evidence="3">
    <location>
        <begin position="260"/>
        <end position="276"/>
    </location>
</feature>
<feature type="compositionally biased region" description="Polar residues" evidence="3">
    <location>
        <begin position="277"/>
        <end position="292"/>
    </location>
</feature>
<feature type="compositionally biased region" description="Polar residues" evidence="3">
    <location>
        <begin position="306"/>
        <end position="330"/>
    </location>
</feature>
<feature type="compositionally biased region" description="Polar residues" evidence="3">
    <location>
        <begin position="338"/>
        <end position="352"/>
    </location>
</feature>
<name>OSBL9_XENTR</name>
<comment type="function">
    <text evidence="1">Interacts with OSBPL11 to function as lipid transfer proteins. Together they form a heterodimer that localizes at the ER-trans-Golgi membrane contact sites, and exchanges phosphatidylserine (1,2-diacyl-sn-glycero-3-phospho-L-serine, PS) for phosphatidylinositol-4-phosphate (1,2-diacyl-sn-glycero-3-phospho-(1D-myo-inositol 4-phosphate), PI(4)P) between the two organelles, a step that is critical for sphingomyelin synthesis in the Golgi complex.</text>
</comment>
<comment type="catalytic activity">
    <reaction evidence="1">
        <text>a 1,2-diacyl-sn-glycero-3-phospho-(1D-myo-inositol 4-phosphate)(out) + a 1,2-diacyl-sn-glycero-3-phospho-L-serine(in) = a 1,2-diacyl-sn-glycero-3-phospho-(1D-myo-inositol 4-phosphate)(in) + a 1,2-diacyl-sn-glycero-3-phospho-L-serine(out)</text>
        <dbReference type="Rhea" id="RHEA:81667"/>
        <dbReference type="ChEBI" id="CHEBI:57262"/>
        <dbReference type="ChEBI" id="CHEBI:58178"/>
    </reaction>
</comment>
<comment type="similarity">
    <text evidence="4">Belongs to the OSBP family.</text>
</comment>
<keyword id="KW-0445">Lipid transport</keyword>
<keyword id="KW-0446">Lipid-binding</keyword>
<keyword id="KW-0597">Phosphoprotein</keyword>
<keyword id="KW-1185">Reference proteome</keyword>
<keyword id="KW-0813">Transport</keyword>